<accession>Q7M886</accession>
<gene>
    <name evidence="1" type="primary">leuB</name>
    <name type="ordered locus">WS1813</name>
</gene>
<proteinExistence type="inferred from homology"/>
<reference key="1">
    <citation type="journal article" date="2003" name="Proc. Natl. Acad. Sci. U.S.A.">
        <title>Complete genome sequence and analysis of Wolinella succinogenes.</title>
        <authorList>
            <person name="Baar C."/>
            <person name="Eppinger M."/>
            <person name="Raddatz G."/>
            <person name="Simon J."/>
            <person name="Lanz C."/>
            <person name="Klimmek O."/>
            <person name="Nandakumar R."/>
            <person name="Gross R."/>
            <person name="Rosinus A."/>
            <person name="Keller H."/>
            <person name="Jagtap P."/>
            <person name="Linke B."/>
            <person name="Meyer F."/>
            <person name="Lederer H."/>
            <person name="Schuster S.C."/>
        </authorList>
    </citation>
    <scope>NUCLEOTIDE SEQUENCE [LARGE SCALE GENOMIC DNA]</scope>
    <source>
        <strain>ATCC 29543 / DSM 1740 / CCUG 13145 / JCM 31913 / LMG 7466 / NCTC 11488 / FDC 602W</strain>
    </source>
</reference>
<protein>
    <recommendedName>
        <fullName evidence="1">3-isopropylmalate dehydrogenase</fullName>
        <ecNumber evidence="1">1.1.1.85</ecNumber>
    </recommendedName>
    <alternativeName>
        <fullName evidence="1">3-IPM-DH</fullName>
    </alternativeName>
    <alternativeName>
        <fullName evidence="1">Beta-IPM dehydrogenase</fullName>
        <shortName evidence="1">IMDH</shortName>
    </alternativeName>
</protein>
<comment type="function">
    <text evidence="1">Catalyzes the oxidation of 3-carboxy-2-hydroxy-4-methylpentanoate (3-isopropylmalate) to 3-carboxy-4-methyl-2-oxopentanoate. The product decarboxylates to 4-methyl-2 oxopentanoate.</text>
</comment>
<comment type="catalytic activity">
    <reaction evidence="1">
        <text>(2R,3S)-3-isopropylmalate + NAD(+) = 4-methyl-2-oxopentanoate + CO2 + NADH</text>
        <dbReference type="Rhea" id="RHEA:32271"/>
        <dbReference type="ChEBI" id="CHEBI:16526"/>
        <dbReference type="ChEBI" id="CHEBI:17865"/>
        <dbReference type="ChEBI" id="CHEBI:35121"/>
        <dbReference type="ChEBI" id="CHEBI:57540"/>
        <dbReference type="ChEBI" id="CHEBI:57945"/>
        <dbReference type="EC" id="1.1.1.85"/>
    </reaction>
</comment>
<comment type="cofactor">
    <cofactor evidence="1">
        <name>Mg(2+)</name>
        <dbReference type="ChEBI" id="CHEBI:18420"/>
    </cofactor>
    <cofactor evidence="1">
        <name>Mn(2+)</name>
        <dbReference type="ChEBI" id="CHEBI:29035"/>
    </cofactor>
    <text evidence="1">Binds 1 Mg(2+) or Mn(2+) ion per subunit.</text>
</comment>
<comment type="pathway">
    <text evidence="1">Amino-acid biosynthesis; L-leucine biosynthesis; L-leucine from 3-methyl-2-oxobutanoate: step 3/4.</text>
</comment>
<comment type="subunit">
    <text evidence="1">Homodimer.</text>
</comment>
<comment type="subcellular location">
    <subcellularLocation>
        <location evidence="1">Cytoplasm</location>
    </subcellularLocation>
</comment>
<comment type="similarity">
    <text evidence="1">Belongs to the isocitrate and isopropylmalate dehydrogenases family. LeuB type 1 subfamily.</text>
</comment>
<comment type="sequence caution" evidence="2">
    <conflict type="erroneous initiation">
        <sequence resource="EMBL-CDS" id="CAE10829"/>
    </conflict>
</comment>
<dbReference type="EC" id="1.1.1.85" evidence="1"/>
<dbReference type="EMBL" id="BX571661">
    <property type="protein sequence ID" value="CAE10829.1"/>
    <property type="status" value="ALT_INIT"/>
    <property type="molecule type" value="Genomic_DNA"/>
</dbReference>
<dbReference type="RefSeq" id="WP_041571886.1">
    <property type="nucleotide sequence ID" value="NC_005090.1"/>
</dbReference>
<dbReference type="SMR" id="Q7M886"/>
<dbReference type="STRING" id="273121.WS1813"/>
<dbReference type="KEGG" id="wsu:WS1813"/>
<dbReference type="eggNOG" id="COG0473">
    <property type="taxonomic scope" value="Bacteria"/>
</dbReference>
<dbReference type="HOGENOM" id="CLU_031953_0_3_7"/>
<dbReference type="UniPathway" id="UPA00048">
    <property type="reaction ID" value="UER00072"/>
</dbReference>
<dbReference type="Proteomes" id="UP000000422">
    <property type="component" value="Chromosome"/>
</dbReference>
<dbReference type="GO" id="GO:0005829">
    <property type="term" value="C:cytosol"/>
    <property type="evidence" value="ECO:0007669"/>
    <property type="project" value="TreeGrafter"/>
</dbReference>
<dbReference type="GO" id="GO:0003862">
    <property type="term" value="F:3-isopropylmalate dehydrogenase activity"/>
    <property type="evidence" value="ECO:0007669"/>
    <property type="project" value="UniProtKB-UniRule"/>
</dbReference>
<dbReference type="GO" id="GO:0000287">
    <property type="term" value="F:magnesium ion binding"/>
    <property type="evidence" value="ECO:0007669"/>
    <property type="project" value="InterPro"/>
</dbReference>
<dbReference type="GO" id="GO:0051287">
    <property type="term" value="F:NAD binding"/>
    <property type="evidence" value="ECO:0007669"/>
    <property type="project" value="InterPro"/>
</dbReference>
<dbReference type="GO" id="GO:0009098">
    <property type="term" value="P:L-leucine biosynthetic process"/>
    <property type="evidence" value="ECO:0007669"/>
    <property type="project" value="UniProtKB-UniRule"/>
</dbReference>
<dbReference type="FunFam" id="3.40.718.10:FF:000028">
    <property type="entry name" value="3-isopropylmalate dehydrogenase"/>
    <property type="match status" value="1"/>
</dbReference>
<dbReference type="Gene3D" id="3.40.718.10">
    <property type="entry name" value="Isopropylmalate Dehydrogenase"/>
    <property type="match status" value="1"/>
</dbReference>
<dbReference type="HAMAP" id="MF_01033">
    <property type="entry name" value="LeuB_type1"/>
    <property type="match status" value="1"/>
</dbReference>
<dbReference type="InterPro" id="IPR019818">
    <property type="entry name" value="IsoCit/isopropylmalate_DH_CS"/>
</dbReference>
<dbReference type="InterPro" id="IPR024084">
    <property type="entry name" value="IsoPropMal-DH-like_dom"/>
</dbReference>
<dbReference type="InterPro" id="IPR004429">
    <property type="entry name" value="Isopropylmalate_DH"/>
</dbReference>
<dbReference type="NCBIfam" id="TIGR00169">
    <property type="entry name" value="leuB"/>
    <property type="match status" value="1"/>
</dbReference>
<dbReference type="PANTHER" id="PTHR42979">
    <property type="entry name" value="3-ISOPROPYLMALATE DEHYDROGENASE"/>
    <property type="match status" value="1"/>
</dbReference>
<dbReference type="PANTHER" id="PTHR42979:SF1">
    <property type="entry name" value="3-ISOPROPYLMALATE DEHYDROGENASE"/>
    <property type="match status" value="1"/>
</dbReference>
<dbReference type="Pfam" id="PF00180">
    <property type="entry name" value="Iso_dh"/>
    <property type="match status" value="1"/>
</dbReference>
<dbReference type="SMART" id="SM01329">
    <property type="entry name" value="Iso_dh"/>
    <property type="match status" value="1"/>
</dbReference>
<dbReference type="SUPFAM" id="SSF53659">
    <property type="entry name" value="Isocitrate/Isopropylmalate dehydrogenase-like"/>
    <property type="match status" value="1"/>
</dbReference>
<dbReference type="PROSITE" id="PS00470">
    <property type="entry name" value="IDH_IMDH"/>
    <property type="match status" value="1"/>
</dbReference>
<keyword id="KW-0028">Amino-acid biosynthesis</keyword>
<keyword id="KW-0100">Branched-chain amino acid biosynthesis</keyword>
<keyword id="KW-0963">Cytoplasm</keyword>
<keyword id="KW-0432">Leucine biosynthesis</keyword>
<keyword id="KW-0460">Magnesium</keyword>
<keyword id="KW-0464">Manganese</keyword>
<keyword id="KW-0479">Metal-binding</keyword>
<keyword id="KW-0520">NAD</keyword>
<keyword id="KW-0560">Oxidoreductase</keyword>
<keyword id="KW-1185">Reference proteome</keyword>
<feature type="chain" id="PRO_0000083783" description="3-isopropylmalate dehydrogenase">
    <location>
        <begin position="1"/>
        <end position="358"/>
    </location>
</feature>
<feature type="binding site" evidence="1">
    <location>
        <begin position="77"/>
        <end position="90"/>
    </location>
    <ligand>
        <name>NAD(+)</name>
        <dbReference type="ChEBI" id="CHEBI:57540"/>
    </ligand>
</feature>
<feature type="binding site" evidence="1">
    <location>
        <position position="97"/>
    </location>
    <ligand>
        <name>substrate</name>
    </ligand>
</feature>
<feature type="binding site" evidence="1">
    <location>
        <position position="107"/>
    </location>
    <ligand>
        <name>substrate</name>
    </ligand>
</feature>
<feature type="binding site" evidence="1">
    <location>
        <position position="135"/>
    </location>
    <ligand>
        <name>substrate</name>
    </ligand>
</feature>
<feature type="binding site" evidence="1">
    <location>
        <position position="220"/>
    </location>
    <ligand>
        <name>Mg(2+)</name>
        <dbReference type="ChEBI" id="CHEBI:18420"/>
    </ligand>
</feature>
<feature type="binding site" evidence="1">
    <location>
        <position position="220"/>
    </location>
    <ligand>
        <name>substrate</name>
    </ligand>
</feature>
<feature type="binding site" evidence="1">
    <location>
        <position position="244"/>
    </location>
    <ligand>
        <name>Mg(2+)</name>
        <dbReference type="ChEBI" id="CHEBI:18420"/>
    </ligand>
</feature>
<feature type="binding site" evidence="1">
    <location>
        <position position="248"/>
    </location>
    <ligand>
        <name>Mg(2+)</name>
        <dbReference type="ChEBI" id="CHEBI:18420"/>
    </ligand>
</feature>
<feature type="binding site" evidence="1">
    <location>
        <begin position="277"/>
        <end position="289"/>
    </location>
    <ligand>
        <name>NAD(+)</name>
        <dbReference type="ChEBI" id="CHEBI:57540"/>
    </ligand>
</feature>
<feature type="site" description="Important for catalysis" evidence="1">
    <location>
        <position position="142"/>
    </location>
</feature>
<feature type="site" description="Important for catalysis" evidence="1">
    <location>
        <position position="188"/>
    </location>
</feature>
<name>LEU3_WOLSU</name>
<sequence>MKKYEIAIIKGDGIGPEIVDEAKKVLDAISYSHGFELSYHDYLMGGIAVDRAGVPLPDETIEGCLRADAVLFGAIGGEKWDSLPRELRPESGLLKLRKSLEIFANLRPTVVYDELIEASTLKESVIKGVDILVVRELIGGIYFGEPKGREGDKAFNTMVYSVPEIERIAHVAFKAAMRRQKRVCSVDKANVLDVSQLWRETVTRIAKEYPEVELSHMYIDNAAMQLIRNPKQFDVILTGNLFGDILSDEASMLSGSIGLLPSASIGGKAALYEPIHGSAPDIAGQGIANPIATIASASMMLRHSLGEVEAADAIDKAIVKTLKEGYRTKDIAAFGAKEICTTDEMGSIIANYAAKKGE</sequence>
<organism>
    <name type="scientific">Wolinella succinogenes (strain ATCC 29543 / DSM 1740 / CCUG 13145 / JCM 31913 / LMG 7466 / NCTC 11488 / FDC 602W)</name>
    <name type="common">Vibrio succinogenes</name>
    <dbReference type="NCBI Taxonomy" id="273121"/>
    <lineage>
        <taxon>Bacteria</taxon>
        <taxon>Pseudomonadati</taxon>
        <taxon>Campylobacterota</taxon>
        <taxon>Epsilonproteobacteria</taxon>
        <taxon>Campylobacterales</taxon>
        <taxon>Helicobacteraceae</taxon>
        <taxon>Wolinella</taxon>
    </lineage>
</organism>
<evidence type="ECO:0000255" key="1">
    <source>
        <dbReference type="HAMAP-Rule" id="MF_01033"/>
    </source>
</evidence>
<evidence type="ECO:0000305" key="2"/>